<comment type="function">
    <text evidence="1">Catalyzes the hydrolysis of glutamine to glutamate and ammonia as part of the biosynthesis of pyridoxal 5'-phosphate. The resulting ammonia molecule is channeled to the active site of PdxS.</text>
</comment>
<comment type="catalytic activity">
    <reaction evidence="1">
        <text>aldehydo-D-ribose 5-phosphate + D-glyceraldehyde 3-phosphate + L-glutamine = pyridoxal 5'-phosphate + L-glutamate + phosphate + 3 H2O + H(+)</text>
        <dbReference type="Rhea" id="RHEA:31507"/>
        <dbReference type="ChEBI" id="CHEBI:15377"/>
        <dbReference type="ChEBI" id="CHEBI:15378"/>
        <dbReference type="ChEBI" id="CHEBI:29985"/>
        <dbReference type="ChEBI" id="CHEBI:43474"/>
        <dbReference type="ChEBI" id="CHEBI:58273"/>
        <dbReference type="ChEBI" id="CHEBI:58359"/>
        <dbReference type="ChEBI" id="CHEBI:59776"/>
        <dbReference type="ChEBI" id="CHEBI:597326"/>
        <dbReference type="EC" id="4.3.3.6"/>
    </reaction>
</comment>
<comment type="catalytic activity">
    <reaction evidence="1">
        <text>L-glutamine + H2O = L-glutamate + NH4(+)</text>
        <dbReference type="Rhea" id="RHEA:15889"/>
        <dbReference type="ChEBI" id="CHEBI:15377"/>
        <dbReference type="ChEBI" id="CHEBI:28938"/>
        <dbReference type="ChEBI" id="CHEBI:29985"/>
        <dbReference type="ChEBI" id="CHEBI:58359"/>
        <dbReference type="EC" id="3.5.1.2"/>
    </reaction>
</comment>
<comment type="pathway">
    <text evidence="1">Cofactor biosynthesis; pyridoxal 5'-phosphate biosynthesis.</text>
</comment>
<comment type="subunit">
    <text evidence="1">In the presence of PdxS, forms a dodecamer of heterodimers. Only shows activity in the heterodimer.</text>
</comment>
<comment type="similarity">
    <text evidence="1">Belongs to the glutaminase PdxT/SNO family.</text>
</comment>
<name>PDXT_LISMF</name>
<evidence type="ECO:0000255" key="1">
    <source>
        <dbReference type="HAMAP-Rule" id="MF_01615"/>
    </source>
</evidence>
<sequence>MKKIGVLAIQGAVDEHIQMIESAGALAFKVKHSSDLDGLDGLVLPGGESTTMRKIMKRYDLMEPIRAFASEGKAIFGTCAGLVLLSKEIEGGEESLGLIEATAIRNGFGRQKESFEAELNVEAFGEPAFEAIFIRAPYLIEPSNEVAVLATVENRIVAAKQANILVTAFHPELTNDNRWMNYFLEKMV</sequence>
<keyword id="KW-0315">Glutamine amidotransferase</keyword>
<keyword id="KW-0378">Hydrolase</keyword>
<keyword id="KW-0456">Lyase</keyword>
<keyword id="KW-0663">Pyridoxal phosphate</keyword>
<dbReference type="EC" id="4.3.3.6" evidence="1"/>
<dbReference type="EC" id="3.5.1.2" evidence="1"/>
<dbReference type="EMBL" id="AE017262">
    <property type="protein sequence ID" value="AAT04903.1"/>
    <property type="molecule type" value="Genomic_DNA"/>
</dbReference>
<dbReference type="RefSeq" id="WP_003728354.1">
    <property type="nucleotide sequence ID" value="NC_002973.6"/>
</dbReference>
<dbReference type="SMR" id="Q71XR2"/>
<dbReference type="KEGG" id="lmf:LMOf2365_2134"/>
<dbReference type="HOGENOM" id="CLU_069674_2_0_9"/>
<dbReference type="UniPathway" id="UPA00245"/>
<dbReference type="GO" id="GO:0005829">
    <property type="term" value="C:cytosol"/>
    <property type="evidence" value="ECO:0007669"/>
    <property type="project" value="TreeGrafter"/>
</dbReference>
<dbReference type="GO" id="GO:1903600">
    <property type="term" value="C:glutaminase complex"/>
    <property type="evidence" value="ECO:0007669"/>
    <property type="project" value="TreeGrafter"/>
</dbReference>
<dbReference type="GO" id="GO:0004359">
    <property type="term" value="F:glutaminase activity"/>
    <property type="evidence" value="ECO:0007669"/>
    <property type="project" value="UniProtKB-UniRule"/>
</dbReference>
<dbReference type="GO" id="GO:0036381">
    <property type="term" value="F:pyridoxal 5'-phosphate synthase (glutamine hydrolysing) activity"/>
    <property type="evidence" value="ECO:0007669"/>
    <property type="project" value="UniProtKB-UniRule"/>
</dbReference>
<dbReference type="GO" id="GO:0006543">
    <property type="term" value="P:glutamine catabolic process"/>
    <property type="evidence" value="ECO:0007669"/>
    <property type="project" value="UniProtKB-UniRule"/>
</dbReference>
<dbReference type="GO" id="GO:0042823">
    <property type="term" value="P:pyridoxal phosphate biosynthetic process"/>
    <property type="evidence" value="ECO:0007669"/>
    <property type="project" value="UniProtKB-UniRule"/>
</dbReference>
<dbReference type="GO" id="GO:0008614">
    <property type="term" value="P:pyridoxine metabolic process"/>
    <property type="evidence" value="ECO:0007669"/>
    <property type="project" value="TreeGrafter"/>
</dbReference>
<dbReference type="CDD" id="cd01749">
    <property type="entry name" value="GATase1_PB"/>
    <property type="match status" value="1"/>
</dbReference>
<dbReference type="FunFam" id="3.40.50.880:FF:000010">
    <property type="entry name" value="uncharacterized protein LOC100176842 isoform X2"/>
    <property type="match status" value="1"/>
</dbReference>
<dbReference type="Gene3D" id="3.40.50.880">
    <property type="match status" value="1"/>
</dbReference>
<dbReference type="HAMAP" id="MF_01615">
    <property type="entry name" value="PdxT"/>
    <property type="match status" value="1"/>
</dbReference>
<dbReference type="InterPro" id="IPR029062">
    <property type="entry name" value="Class_I_gatase-like"/>
</dbReference>
<dbReference type="InterPro" id="IPR002161">
    <property type="entry name" value="PdxT/SNO"/>
</dbReference>
<dbReference type="InterPro" id="IPR021196">
    <property type="entry name" value="PdxT/SNO_CS"/>
</dbReference>
<dbReference type="NCBIfam" id="TIGR03800">
    <property type="entry name" value="PLP_synth_Pdx2"/>
    <property type="match status" value="1"/>
</dbReference>
<dbReference type="PANTHER" id="PTHR31559">
    <property type="entry name" value="PYRIDOXAL 5'-PHOSPHATE SYNTHASE SUBUNIT SNO"/>
    <property type="match status" value="1"/>
</dbReference>
<dbReference type="PANTHER" id="PTHR31559:SF0">
    <property type="entry name" value="PYRIDOXAL 5'-PHOSPHATE SYNTHASE SUBUNIT SNO1-RELATED"/>
    <property type="match status" value="1"/>
</dbReference>
<dbReference type="Pfam" id="PF01174">
    <property type="entry name" value="SNO"/>
    <property type="match status" value="1"/>
</dbReference>
<dbReference type="PIRSF" id="PIRSF005639">
    <property type="entry name" value="Glut_amidoT_SNO"/>
    <property type="match status" value="1"/>
</dbReference>
<dbReference type="SUPFAM" id="SSF52317">
    <property type="entry name" value="Class I glutamine amidotransferase-like"/>
    <property type="match status" value="1"/>
</dbReference>
<dbReference type="PROSITE" id="PS01236">
    <property type="entry name" value="PDXT_SNO_1"/>
    <property type="match status" value="1"/>
</dbReference>
<dbReference type="PROSITE" id="PS51130">
    <property type="entry name" value="PDXT_SNO_2"/>
    <property type="match status" value="1"/>
</dbReference>
<organism>
    <name type="scientific">Listeria monocytogenes serotype 4b (strain F2365)</name>
    <dbReference type="NCBI Taxonomy" id="265669"/>
    <lineage>
        <taxon>Bacteria</taxon>
        <taxon>Bacillati</taxon>
        <taxon>Bacillota</taxon>
        <taxon>Bacilli</taxon>
        <taxon>Bacillales</taxon>
        <taxon>Listeriaceae</taxon>
        <taxon>Listeria</taxon>
    </lineage>
</organism>
<reference key="1">
    <citation type="journal article" date="2004" name="Nucleic Acids Res.">
        <title>Whole genome comparisons of serotype 4b and 1/2a strains of the food-borne pathogen Listeria monocytogenes reveal new insights into the core genome components of this species.</title>
        <authorList>
            <person name="Nelson K.E."/>
            <person name="Fouts D.E."/>
            <person name="Mongodin E.F."/>
            <person name="Ravel J."/>
            <person name="DeBoy R.T."/>
            <person name="Kolonay J.F."/>
            <person name="Rasko D.A."/>
            <person name="Angiuoli S.V."/>
            <person name="Gill S.R."/>
            <person name="Paulsen I.T."/>
            <person name="Peterson J.D."/>
            <person name="White O."/>
            <person name="Nelson W.C."/>
            <person name="Nierman W.C."/>
            <person name="Beanan M.J."/>
            <person name="Brinkac L.M."/>
            <person name="Daugherty S.C."/>
            <person name="Dodson R.J."/>
            <person name="Durkin A.S."/>
            <person name="Madupu R."/>
            <person name="Haft D.H."/>
            <person name="Selengut J."/>
            <person name="Van Aken S.E."/>
            <person name="Khouri H.M."/>
            <person name="Fedorova N."/>
            <person name="Forberger H.A."/>
            <person name="Tran B."/>
            <person name="Kathariou S."/>
            <person name="Wonderling L.D."/>
            <person name="Uhlich G.A."/>
            <person name="Bayles D.O."/>
            <person name="Luchansky J.B."/>
            <person name="Fraser C.M."/>
        </authorList>
    </citation>
    <scope>NUCLEOTIDE SEQUENCE [LARGE SCALE GENOMIC DNA]</scope>
    <source>
        <strain>F2365</strain>
    </source>
</reference>
<gene>
    <name evidence="1" type="primary">pdxT</name>
    <name type="ordered locus">LMOf2365_2134</name>
</gene>
<feature type="chain" id="PRO_0000135644" description="Pyridoxal 5'-phosphate synthase subunit PdxT">
    <location>
        <begin position="1"/>
        <end position="188"/>
    </location>
</feature>
<feature type="active site" description="Nucleophile" evidence="1">
    <location>
        <position position="79"/>
    </location>
</feature>
<feature type="active site" description="Charge relay system" evidence="1">
    <location>
        <position position="170"/>
    </location>
</feature>
<feature type="active site" description="Charge relay system" evidence="1">
    <location>
        <position position="172"/>
    </location>
</feature>
<feature type="binding site" evidence="1">
    <location>
        <begin position="47"/>
        <end position="49"/>
    </location>
    <ligand>
        <name>L-glutamine</name>
        <dbReference type="ChEBI" id="CHEBI:58359"/>
    </ligand>
</feature>
<feature type="binding site" evidence="1">
    <location>
        <position position="105"/>
    </location>
    <ligand>
        <name>L-glutamine</name>
        <dbReference type="ChEBI" id="CHEBI:58359"/>
    </ligand>
</feature>
<feature type="binding site" evidence="1">
    <location>
        <begin position="134"/>
        <end position="135"/>
    </location>
    <ligand>
        <name>L-glutamine</name>
        <dbReference type="ChEBI" id="CHEBI:58359"/>
    </ligand>
</feature>
<accession>Q71XR2</accession>
<proteinExistence type="inferred from homology"/>
<protein>
    <recommendedName>
        <fullName evidence="1">Pyridoxal 5'-phosphate synthase subunit PdxT</fullName>
        <ecNumber evidence="1">4.3.3.6</ecNumber>
    </recommendedName>
    <alternativeName>
        <fullName evidence="1">Pdx2</fullName>
    </alternativeName>
    <alternativeName>
        <fullName evidence="1">Pyridoxal 5'-phosphate synthase glutaminase subunit</fullName>
        <ecNumber evidence="1">3.5.1.2</ecNumber>
    </alternativeName>
</protein>